<protein>
    <recommendedName>
        <fullName>Autophagy-related protein 17</fullName>
    </recommendedName>
</protein>
<proteinExistence type="evidence at protein level"/>
<feature type="chain" id="PRO_0000124564" description="Autophagy-related protein 17">
    <location>
        <begin position="1"/>
        <end position="411"/>
    </location>
</feature>
<feature type="region of interest" description="Disordered" evidence="2">
    <location>
        <begin position="388"/>
        <end position="411"/>
    </location>
</feature>
<feature type="compositionally biased region" description="Basic and acidic residues" evidence="2">
    <location>
        <begin position="390"/>
        <end position="404"/>
    </location>
</feature>
<keyword id="KW-0072">Autophagy</keyword>
<keyword id="KW-0963">Cytoplasm</keyword>
<keyword id="KW-0472">Membrane</keyword>
<keyword id="KW-1185">Reference proteome</keyword>
<reference key="1">
    <citation type="journal article" date="2002" name="Nature">
        <title>The genome sequence of Schizosaccharomyces pombe.</title>
        <authorList>
            <person name="Wood V."/>
            <person name="Gwilliam R."/>
            <person name="Rajandream M.A."/>
            <person name="Lyne M.H."/>
            <person name="Lyne R."/>
            <person name="Stewart A."/>
            <person name="Sgouros J.G."/>
            <person name="Peat N."/>
            <person name="Hayles J."/>
            <person name="Baker S.G."/>
            <person name="Basham D."/>
            <person name="Bowman S."/>
            <person name="Brooks K."/>
            <person name="Brown D."/>
            <person name="Brown S."/>
            <person name="Chillingworth T."/>
            <person name="Churcher C.M."/>
            <person name="Collins M."/>
            <person name="Connor R."/>
            <person name="Cronin A."/>
            <person name="Davis P."/>
            <person name="Feltwell T."/>
            <person name="Fraser A."/>
            <person name="Gentles S."/>
            <person name="Goble A."/>
            <person name="Hamlin N."/>
            <person name="Harris D.E."/>
            <person name="Hidalgo J."/>
            <person name="Hodgson G."/>
            <person name="Holroyd S."/>
            <person name="Hornsby T."/>
            <person name="Howarth S."/>
            <person name="Huckle E.J."/>
            <person name="Hunt S."/>
            <person name="Jagels K."/>
            <person name="James K.D."/>
            <person name="Jones L."/>
            <person name="Jones M."/>
            <person name="Leather S."/>
            <person name="McDonald S."/>
            <person name="McLean J."/>
            <person name="Mooney P."/>
            <person name="Moule S."/>
            <person name="Mungall K.L."/>
            <person name="Murphy L.D."/>
            <person name="Niblett D."/>
            <person name="Odell C."/>
            <person name="Oliver K."/>
            <person name="O'Neil S."/>
            <person name="Pearson D."/>
            <person name="Quail M.A."/>
            <person name="Rabbinowitsch E."/>
            <person name="Rutherford K.M."/>
            <person name="Rutter S."/>
            <person name="Saunders D."/>
            <person name="Seeger K."/>
            <person name="Sharp S."/>
            <person name="Skelton J."/>
            <person name="Simmonds M.N."/>
            <person name="Squares R."/>
            <person name="Squares S."/>
            <person name="Stevens K."/>
            <person name="Taylor K."/>
            <person name="Taylor R.G."/>
            <person name="Tivey A."/>
            <person name="Walsh S.V."/>
            <person name="Warren T."/>
            <person name="Whitehead S."/>
            <person name="Woodward J.R."/>
            <person name="Volckaert G."/>
            <person name="Aert R."/>
            <person name="Robben J."/>
            <person name="Grymonprez B."/>
            <person name="Weltjens I."/>
            <person name="Vanstreels E."/>
            <person name="Rieger M."/>
            <person name="Schaefer M."/>
            <person name="Mueller-Auer S."/>
            <person name="Gabel C."/>
            <person name="Fuchs M."/>
            <person name="Duesterhoeft A."/>
            <person name="Fritzc C."/>
            <person name="Holzer E."/>
            <person name="Moestl D."/>
            <person name="Hilbert H."/>
            <person name="Borzym K."/>
            <person name="Langer I."/>
            <person name="Beck A."/>
            <person name="Lehrach H."/>
            <person name="Reinhardt R."/>
            <person name="Pohl T.M."/>
            <person name="Eger P."/>
            <person name="Zimmermann W."/>
            <person name="Wedler H."/>
            <person name="Wambutt R."/>
            <person name="Purnelle B."/>
            <person name="Goffeau A."/>
            <person name="Cadieu E."/>
            <person name="Dreano S."/>
            <person name="Gloux S."/>
            <person name="Lelaure V."/>
            <person name="Mottier S."/>
            <person name="Galibert F."/>
            <person name="Aves S.J."/>
            <person name="Xiang Z."/>
            <person name="Hunt C."/>
            <person name="Moore K."/>
            <person name="Hurst S.M."/>
            <person name="Lucas M."/>
            <person name="Rochet M."/>
            <person name="Gaillardin C."/>
            <person name="Tallada V.A."/>
            <person name="Garzon A."/>
            <person name="Thode G."/>
            <person name="Daga R.R."/>
            <person name="Cruzado L."/>
            <person name="Jimenez J."/>
            <person name="Sanchez M."/>
            <person name="del Rey F."/>
            <person name="Benito J."/>
            <person name="Dominguez A."/>
            <person name="Revuelta J.L."/>
            <person name="Moreno S."/>
            <person name="Armstrong J."/>
            <person name="Forsburg S.L."/>
            <person name="Cerutti L."/>
            <person name="Lowe T."/>
            <person name="McCombie W.R."/>
            <person name="Paulsen I."/>
            <person name="Potashkin J."/>
            <person name="Shpakovski G.V."/>
            <person name="Ussery D."/>
            <person name="Barrell B.G."/>
            <person name="Nurse P."/>
        </authorList>
    </citation>
    <scope>NUCLEOTIDE SEQUENCE [LARGE SCALE GENOMIC DNA]</scope>
    <source>
        <strain>972 / ATCC 24843</strain>
    </source>
</reference>
<reference key="2">
    <citation type="journal article" date="2011" name="Science">
        <title>Comparative functional genomics of the fission yeasts.</title>
        <authorList>
            <person name="Rhind N."/>
            <person name="Chen Z."/>
            <person name="Yassour M."/>
            <person name="Thompson D.A."/>
            <person name="Haas B.J."/>
            <person name="Habib N."/>
            <person name="Wapinski I."/>
            <person name="Roy S."/>
            <person name="Lin M.F."/>
            <person name="Heiman D.I."/>
            <person name="Young S.K."/>
            <person name="Furuya K."/>
            <person name="Guo Y."/>
            <person name="Pidoux A."/>
            <person name="Chen H.M."/>
            <person name="Robbertse B."/>
            <person name="Goldberg J.M."/>
            <person name="Aoki K."/>
            <person name="Bayne E.H."/>
            <person name="Berlin A.M."/>
            <person name="Desjardins C.A."/>
            <person name="Dobbs E."/>
            <person name="Dukaj L."/>
            <person name="Fan L."/>
            <person name="FitzGerald M.G."/>
            <person name="French C."/>
            <person name="Gujja S."/>
            <person name="Hansen K."/>
            <person name="Keifenheim D."/>
            <person name="Levin J.Z."/>
            <person name="Mosher R.A."/>
            <person name="Mueller C.A."/>
            <person name="Pfiffner J."/>
            <person name="Priest M."/>
            <person name="Russ C."/>
            <person name="Smialowska A."/>
            <person name="Swoboda P."/>
            <person name="Sykes S.M."/>
            <person name="Vaughn M."/>
            <person name="Vengrova S."/>
            <person name="Yoder R."/>
            <person name="Zeng Q."/>
            <person name="Allshire R."/>
            <person name="Baulcombe D."/>
            <person name="Birren B.W."/>
            <person name="Brown W."/>
            <person name="Ekwall K."/>
            <person name="Kellis M."/>
            <person name="Leatherwood J."/>
            <person name="Levin H."/>
            <person name="Margalit H."/>
            <person name="Martienssen R."/>
            <person name="Nieduszynski C.A."/>
            <person name="Spatafora J.W."/>
            <person name="Friedman N."/>
            <person name="Dalgaard J.Z."/>
            <person name="Baumann P."/>
            <person name="Niki H."/>
            <person name="Regev A."/>
            <person name="Nusbaum C."/>
        </authorList>
    </citation>
    <scope>REVISION OF GENE MODEL</scope>
</reference>
<reference key="3">
    <citation type="journal article" date="2013" name="PLoS Genet.">
        <title>Global analysis of fission yeast mating genes reveals new autophagy factors.</title>
        <authorList>
            <person name="Sun L.L."/>
            <person name="Li M."/>
            <person name="Suo F."/>
            <person name="Liu X.M."/>
            <person name="Shen E.Z."/>
            <person name="Yang B."/>
            <person name="Dong M.Q."/>
            <person name="He W.Z."/>
            <person name="Du L.L."/>
        </authorList>
    </citation>
    <scope>DISRUPTION PHENOTYPE</scope>
    <scope>SUBCELLULAR LOCATION</scope>
</reference>
<reference key="4">
    <citation type="journal article" date="2017" name="Autophagy">
        <title>Conserved and unique features of the fission yeast core Atg1 complex.</title>
        <authorList>
            <person name="Nanji T."/>
            <person name="Liu X."/>
            <person name="Chew L.H."/>
            <person name="Li F.K."/>
            <person name="Biswas M."/>
            <person name="Yu Z.Q."/>
            <person name="Lu S."/>
            <person name="Dong M.Q."/>
            <person name="Du L.L."/>
            <person name="Klionsky D.J."/>
            <person name="Yip C.K."/>
        </authorList>
    </citation>
    <scope>SUBUNIT</scope>
    <scope>INTERACTION WITH ATG13</scope>
</reference>
<gene>
    <name type="primary">atg17</name>
    <name type="ORF">SPAC10F6.11c</name>
</gene>
<sequence>MELLQQWTQQAKAALTQARQLCGDAHKFNEDAKTDLRNSIKQHQQLKELAKLTASQCTRLDSSTALIKQLLDLVQNYPTFNQLNVLHDRLESSLKRLRDCTLDPALGSEYTNLYAFVDDTALEDLKTRLRGVTDGVWNAFEKLAGLLEEDLCANYHKRLEAVSLDFLPPAYNDTAEELADLLLQVAQHYDQCSEALNIYDTLSDAEKKDLQEVLQSDSNHVPSVLTELRSGLDQTIHYFNAVQSYKSKVDSATSILEALAEELNKNQLTNQRHEAAHELMRAQTGLEIPQLAQELVQLERHYTHFAKAYTALLQEIHRRQTYENCVRSIVDEFVGRLEKEQQAEAKCRIDFFNQYGDYLPQTLWGAVTDPPLHFEIIEHQYTELPNVKVIPDKNDKKSKQREKSSTTASKR</sequence>
<dbReference type="EMBL" id="CU329670">
    <property type="protein sequence ID" value="CAA15724.2"/>
    <property type="molecule type" value="Genomic_DNA"/>
</dbReference>
<dbReference type="PIR" id="T37505">
    <property type="entry name" value="T37505"/>
</dbReference>
<dbReference type="RefSeq" id="NP_593262.2">
    <property type="nucleotide sequence ID" value="NM_001018659.2"/>
</dbReference>
<dbReference type="SMR" id="O42651"/>
<dbReference type="BioGRID" id="279449">
    <property type="interactions" value="33"/>
</dbReference>
<dbReference type="ComplexPortal" id="CPX-25773">
    <property type="entry name" value="Atg1/ULK1 protein kinase complex"/>
</dbReference>
<dbReference type="FunCoup" id="O42651">
    <property type="interactions" value="27"/>
</dbReference>
<dbReference type="IntAct" id="O42651">
    <property type="interactions" value="1"/>
</dbReference>
<dbReference type="STRING" id="284812.O42651"/>
<dbReference type="PaxDb" id="4896-SPAC10F6.11c.1"/>
<dbReference type="EnsemblFungi" id="SPAC10F6.11c.1">
    <property type="protein sequence ID" value="SPAC10F6.11c.1:pep"/>
    <property type="gene ID" value="SPAC10F6.11c"/>
</dbReference>
<dbReference type="GeneID" id="2543011"/>
<dbReference type="KEGG" id="spo:2543011"/>
<dbReference type="PomBase" id="SPAC10F6.11c">
    <property type="gene designation" value="atg17"/>
</dbReference>
<dbReference type="VEuPathDB" id="FungiDB:SPAC10F6.11c"/>
<dbReference type="eggNOG" id="ENOG502RW77">
    <property type="taxonomic scope" value="Eukaryota"/>
</dbReference>
<dbReference type="HOGENOM" id="CLU_674655_0_0_1"/>
<dbReference type="InParanoid" id="O42651"/>
<dbReference type="OMA" id="PENIWPN"/>
<dbReference type="PRO" id="PR:O42651"/>
<dbReference type="Proteomes" id="UP000002485">
    <property type="component" value="Chromosome I"/>
</dbReference>
<dbReference type="GO" id="GO:1990316">
    <property type="term" value="C:Atg1/ULK1 kinase complex"/>
    <property type="evidence" value="ECO:0000269"/>
    <property type="project" value="PomBase"/>
</dbReference>
<dbReference type="GO" id="GO:0000407">
    <property type="term" value="C:phagophore assembly site"/>
    <property type="evidence" value="ECO:0000314"/>
    <property type="project" value="PomBase"/>
</dbReference>
<dbReference type="GO" id="GO:0034045">
    <property type="term" value="C:phagophore assembly site membrane"/>
    <property type="evidence" value="ECO:0007669"/>
    <property type="project" value="UniProtKB-SubCell"/>
</dbReference>
<dbReference type="GO" id="GO:0060090">
    <property type="term" value="F:molecular adaptor activity"/>
    <property type="evidence" value="ECO:0000318"/>
    <property type="project" value="GO_Central"/>
</dbReference>
<dbReference type="GO" id="GO:0030295">
    <property type="term" value="F:protein kinase activator activity"/>
    <property type="evidence" value="ECO:0000318"/>
    <property type="project" value="GO_Central"/>
</dbReference>
<dbReference type="GO" id="GO:0000045">
    <property type="term" value="P:autophagosome assembly"/>
    <property type="evidence" value="ECO:0000318"/>
    <property type="project" value="GO_Central"/>
</dbReference>
<dbReference type="GO" id="GO:0016236">
    <property type="term" value="P:macroautophagy"/>
    <property type="evidence" value="ECO:0000315"/>
    <property type="project" value="PomBase"/>
</dbReference>
<dbReference type="GO" id="GO:0000423">
    <property type="term" value="P:mitophagy"/>
    <property type="evidence" value="ECO:0000315"/>
    <property type="project" value="PomBase"/>
</dbReference>
<dbReference type="GO" id="GO:0000425">
    <property type="term" value="P:pexophagy"/>
    <property type="evidence" value="ECO:0000318"/>
    <property type="project" value="GO_Central"/>
</dbReference>
<dbReference type="GO" id="GO:0034727">
    <property type="term" value="P:piecemeal microautophagy of the nucleus"/>
    <property type="evidence" value="ECO:0000318"/>
    <property type="project" value="GO_Central"/>
</dbReference>
<dbReference type="InterPro" id="IPR007240">
    <property type="entry name" value="Atg17"/>
</dbReference>
<dbReference type="InterPro" id="IPR045326">
    <property type="entry name" value="ATG17-like_dom"/>
</dbReference>
<dbReference type="PANTHER" id="PTHR28005">
    <property type="entry name" value="AUTOPHAGY-RELATED PROTEIN 17"/>
    <property type="match status" value="1"/>
</dbReference>
<dbReference type="PANTHER" id="PTHR28005:SF1">
    <property type="entry name" value="AUTOPHAGY-RELATED PROTEIN 17"/>
    <property type="match status" value="1"/>
</dbReference>
<dbReference type="Pfam" id="PF04108">
    <property type="entry name" value="ATG17_like"/>
    <property type="match status" value="1"/>
</dbReference>
<name>ATG17_SCHPO</name>
<accession>O42651</accession>
<comment type="function">
    <text evidence="1">Autophagy-specific protein that functions in response to autophagy-inducing signals as a scaffold to recruit other ATG proteins to organize preautophagosomal structure (PAS) formation. Modulates the timing and magnitude of the autophagy response, such as the size of the sequestering vesicles. Plays particularly a role in pexophagy and nucleophagy (By similarity).</text>
</comment>
<comment type="subunit">
    <text evidence="4">Homodimer (PubMed:28976798). Component of the atg1 kinase complex composed of at least atg1, atg13, atg17 and atg101 (PubMed:28976798). Interacts directly with atg13 (PubMed:28976798).</text>
</comment>
<comment type="subcellular location">
    <subcellularLocation>
        <location evidence="1">Cytoplasm</location>
    </subcellularLocation>
    <subcellularLocation>
        <location evidence="3">Preautophagosomal structure membrane</location>
        <topology evidence="3">Peripheral membrane protein</topology>
    </subcellularLocation>
</comment>
<comment type="disruption phenotype">
    <text evidence="3">Impairs atg8-processing.</text>
</comment>
<comment type="similarity">
    <text evidence="5">Belongs to the ATG17 family.</text>
</comment>
<evidence type="ECO:0000250" key="1"/>
<evidence type="ECO:0000256" key="2">
    <source>
        <dbReference type="SAM" id="MobiDB-lite"/>
    </source>
</evidence>
<evidence type="ECO:0000269" key="3">
    <source>
    </source>
</evidence>
<evidence type="ECO:0000269" key="4">
    <source>
    </source>
</evidence>
<evidence type="ECO:0000305" key="5"/>
<organism>
    <name type="scientific">Schizosaccharomyces pombe (strain 972 / ATCC 24843)</name>
    <name type="common">Fission yeast</name>
    <dbReference type="NCBI Taxonomy" id="284812"/>
    <lineage>
        <taxon>Eukaryota</taxon>
        <taxon>Fungi</taxon>
        <taxon>Dikarya</taxon>
        <taxon>Ascomycota</taxon>
        <taxon>Taphrinomycotina</taxon>
        <taxon>Schizosaccharomycetes</taxon>
        <taxon>Schizosaccharomycetales</taxon>
        <taxon>Schizosaccharomycetaceae</taxon>
        <taxon>Schizosaccharomyces</taxon>
    </lineage>
</organism>